<gene>
    <name evidence="1" type="primary">rplE</name>
    <name type="ordered locus">BG0502</name>
</gene>
<protein>
    <recommendedName>
        <fullName evidence="1">Large ribosomal subunit protein uL5</fullName>
    </recommendedName>
    <alternativeName>
        <fullName evidence="2">50S ribosomal protein L5</fullName>
    </alternativeName>
</protein>
<comment type="function">
    <text evidence="1">This is one of the proteins that bind and probably mediate the attachment of the 5S RNA into the large ribosomal subunit, where it forms part of the central protuberance. In the 70S ribosome it contacts protein S13 of the 30S subunit (bridge B1b), connecting the 2 subunits; this bridge is implicated in subunit movement. Contacts the P site tRNA; the 5S rRNA and some of its associated proteins might help stabilize positioning of ribosome-bound tRNAs.</text>
</comment>
<comment type="subunit">
    <text evidence="1">Part of the 50S ribosomal subunit; part of the 5S rRNA/L5/L18/L25 subcomplex. Contacts the 5S rRNA and the P site tRNA. Forms a bridge to the 30S subunit in the 70S ribosome.</text>
</comment>
<comment type="similarity">
    <text evidence="1">Belongs to the universal ribosomal protein uL5 family.</text>
</comment>
<feature type="chain" id="PRO_0000242975" description="Large ribosomal subunit protein uL5">
    <location>
        <begin position="1"/>
        <end position="182"/>
    </location>
</feature>
<evidence type="ECO:0000255" key="1">
    <source>
        <dbReference type="HAMAP-Rule" id="MF_01333"/>
    </source>
</evidence>
<evidence type="ECO:0000305" key="2"/>
<dbReference type="EMBL" id="CP000013">
    <property type="protein sequence ID" value="AAU07341.1"/>
    <property type="molecule type" value="Genomic_DNA"/>
</dbReference>
<dbReference type="RefSeq" id="WP_011193809.1">
    <property type="nucleotide sequence ID" value="NZ_CP028872.1"/>
</dbReference>
<dbReference type="SMR" id="Q661D0"/>
<dbReference type="GeneID" id="45161285"/>
<dbReference type="KEGG" id="bga:BG0502"/>
<dbReference type="eggNOG" id="COG0094">
    <property type="taxonomic scope" value="Bacteria"/>
</dbReference>
<dbReference type="HOGENOM" id="CLU_061015_2_1_12"/>
<dbReference type="OrthoDB" id="9806626at2"/>
<dbReference type="Proteomes" id="UP000002276">
    <property type="component" value="Chromosome"/>
</dbReference>
<dbReference type="GO" id="GO:1990904">
    <property type="term" value="C:ribonucleoprotein complex"/>
    <property type="evidence" value="ECO:0007669"/>
    <property type="project" value="UniProtKB-KW"/>
</dbReference>
<dbReference type="GO" id="GO:0005840">
    <property type="term" value="C:ribosome"/>
    <property type="evidence" value="ECO:0007669"/>
    <property type="project" value="UniProtKB-KW"/>
</dbReference>
<dbReference type="GO" id="GO:0019843">
    <property type="term" value="F:rRNA binding"/>
    <property type="evidence" value="ECO:0007669"/>
    <property type="project" value="UniProtKB-UniRule"/>
</dbReference>
<dbReference type="GO" id="GO:0003735">
    <property type="term" value="F:structural constituent of ribosome"/>
    <property type="evidence" value="ECO:0007669"/>
    <property type="project" value="InterPro"/>
</dbReference>
<dbReference type="GO" id="GO:0000049">
    <property type="term" value="F:tRNA binding"/>
    <property type="evidence" value="ECO:0007669"/>
    <property type="project" value="UniProtKB-UniRule"/>
</dbReference>
<dbReference type="GO" id="GO:0006412">
    <property type="term" value="P:translation"/>
    <property type="evidence" value="ECO:0007669"/>
    <property type="project" value="UniProtKB-UniRule"/>
</dbReference>
<dbReference type="FunFam" id="3.30.1440.10:FF:000001">
    <property type="entry name" value="50S ribosomal protein L5"/>
    <property type="match status" value="1"/>
</dbReference>
<dbReference type="Gene3D" id="3.30.1440.10">
    <property type="match status" value="1"/>
</dbReference>
<dbReference type="HAMAP" id="MF_01333_B">
    <property type="entry name" value="Ribosomal_uL5_B"/>
    <property type="match status" value="1"/>
</dbReference>
<dbReference type="InterPro" id="IPR002132">
    <property type="entry name" value="Ribosomal_uL5"/>
</dbReference>
<dbReference type="InterPro" id="IPR020930">
    <property type="entry name" value="Ribosomal_uL5_bac-type"/>
</dbReference>
<dbReference type="InterPro" id="IPR031309">
    <property type="entry name" value="Ribosomal_uL5_C"/>
</dbReference>
<dbReference type="InterPro" id="IPR020929">
    <property type="entry name" value="Ribosomal_uL5_CS"/>
</dbReference>
<dbReference type="InterPro" id="IPR022803">
    <property type="entry name" value="Ribosomal_uL5_dom_sf"/>
</dbReference>
<dbReference type="InterPro" id="IPR031310">
    <property type="entry name" value="Ribosomal_uL5_N"/>
</dbReference>
<dbReference type="NCBIfam" id="NF000585">
    <property type="entry name" value="PRK00010.1"/>
    <property type="match status" value="1"/>
</dbReference>
<dbReference type="PANTHER" id="PTHR11994">
    <property type="entry name" value="60S RIBOSOMAL PROTEIN L11-RELATED"/>
    <property type="match status" value="1"/>
</dbReference>
<dbReference type="Pfam" id="PF00281">
    <property type="entry name" value="Ribosomal_L5"/>
    <property type="match status" value="1"/>
</dbReference>
<dbReference type="Pfam" id="PF00673">
    <property type="entry name" value="Ribosomal_L5_C"/>
    <property type="match status" value="1"/>
</dbReference>
<dbReference type="PIRSF" id="PIRSF002161">
    <property type="entry name" value="Ribosomal_L5"/>
    <property type="match status" value="1"/>
</dbReference>
<dbReference type="SUPFAM" id="SSF55282">
    <property type="entry name" value="RL5-like"/>
    <property type="match status" value="1"/>
</dbReference>
<dbReference type="PROSITE" id="PS00358">
    <property type="entry name" value="RIBOSOMAL_L5"/>
    <property type="match status" value="1"/>
</dbReference>
<reference key="1">
    <citation type="journal article" date="2004" name="Nucleic Acids Res.">
        <title>Comparative analysis of the Borrelia garinii genome.</title>
        <authorList>
            <person name="Gloeckner G."/>
            <person name="Lehmann R."/>
            <person name="Romualdi A."/>
            <person name="Pradella S."/>
            <person name="Schulte-Spechtel U."/>
            <person name="Schilhabel M."/>
            <person name="Wilske B."/>
            <person name="Suehnel J."/>
            <person name="Platzer M."/>
        </authorList>
    </citation>
    <scope>NUCLEOTIDE SEQUENCE [LARGE SCALE GENOMIC DNA]</scope>
    <source>
        <strain>ATCC BAA-2496 / DSM 23469 / PBi</strain>
    </source>
</reference>
<sequence length="182" mass="20417">MNYIPELKKYYKDSVIKELVKEFEYKSIMQVPKLEKIVVSVGVGEAVRNKKLLDSAVLELSQITGQKAVKTKAKKAIAGFKIRQGQEIGAKVTLRGNAMYEFLYKLIHLALPRVKDFRGINGNAFDGNGNYSFGITEQIIFSEIDYDKIERISGLNVTIVTTASNDKESKALLLKFGMPFSN</sequence>
<proteinExistence type="inferred from homology"/>
<keyword id="KW-0687">Ribonucleoprotein</keyword>
<keyword id="KW-0689">Ribosomal protein</keyword>
<keyword id="KW-0694">RNA-binding</keyword>
<keyword id="KW-0699">rRNA-binding</keyword>
<keyword id="KW-0820">tRNA-binding</keyword>
<organism>
    <name type="scientific">Borrelia garinii subsp. bavariensis (strain ATCC BAA-2496 / DSM 23469 / PBi)</name>
    <name type="common">Borreliella bavariensis</name>
    <dbReference type="NCBI Taxonomy" id="290434"/>
    <lineage>
        <taxon>Bacteria</taxon>
        <taxon>Pseudomonadati</taxon>
        <taxon>Spirochaetota</taxon>
        <taxon>Spirochaetia</taxon>
        <taxon>Spirochaetales</taxon>
        <taxon>Borreliaceae</taxon>
        <taxon>Borreliella</taxon>
    </lineage>
</organism>
<name>RL5_BORGP</name>
<accession>Q661D0</accession>